<dbReference type="EC" id="3.1.2.6" evidence="1"/>
<dbReference type="EMBL" id="BX950851">
    <property type="protein sequence ID" value="CAG76240.1"/>
    <property type="molecule type" value="Genomic_DNA"/>
</dbReference>
<dbReference type="RefSeq" id="WP_011094855.1">
    <property type="nucleotide sequence ID" value="NC_004547.2"/>
</dbReference>
<dbReference type="SMR" id="Q6D1V5"/>
<dbReference type="STRING" id="218491.ECA3342"/>
<dbReference type="GeneID" id="57210032"/>
<dbReference type="KEGG" id="eca:ECA3342"/>
<dbReference type="PATRIC" id="fig|218491.5.peg.3393"/>
<dbReference type="eggNOG" id="COG0491">
    <property type="taxonomic scope" value="Bacteria"/>
</dbReference>
<dbReference type="HOGENOM" id="CLU_030571_4_1_6"/>
<dbReference type="OrthoDB" id="9802248at2"/>
<dbReference type="UniPathway" id="UPA00619">
    <property type="reaction ID" value="UER00676"/>
</dbReference>
<dbReference type="Proteomes" id="UP000007966">
    <property type="component" value="Chromosome"/>
</dbReference>
<dbReference type="GO" id="GO:0004416">
    <property type="term" value="F:hydroxyacylglutathione hydrolase activity"/>
    <property type="evidence" value="ECO:0007669"/>
    <property type="project" value="UniProtKB-UniRule"/>
</dbReference>
<dbReference type="GO" id="GO:0046872">
    <property type="term" value="F:metal ion binding"/>
    <property type="evidence" value="ECO:0007669"/>
    <property type="project" value="UniProtKB-KW"/>
</dbReference>
<dbReference type="GO" id="GO:0019243">
    <property type="term" value="P:methylglyoxal catabolic process to D-lactate via S-lactoyl-glutathione"/>
    <property type="evidence" value="ECO:0007669"/>
    <property type="project" value="InterPro"/>
</dbReference>
<dbReference type="CDD" id="cd07723">
    <property type="entry name" value="hydroxyacylglutathione_hydrolase_MBL-fold"/>
    <property type="match status" value="1"/>
</dbReference>
<dbReference type="Gene3D" id="3.60.15.10">
    <property type="entry name" value="Ribonuclease Z/Hydroxyacylglutathione hydrolase-like"/>
    <property type="match status" value="1"/>
</dbReference>
<dbReference type="HAMAP" id="MF_01374">
    <property type="entry name" value="Glyoxalase_2"/>
    <property type="match status" value="1"/>
</dbReference>
<dbReference type="InterPro" id="IPR035680">
    <property type="entry name" value="Clx_II_MBL"/>
</dbReference>
<dbReference type="InterPro" id="IPR050110">
    <property type="entry name" value="Glyoxalase_II_hydrolase"/>
</dbReference>
<dbReference type="InterPro" id="IPR032282">
    <property type="entry name" value="HAGH_C"/>
</dbReference>
<dbReference type="InterPro" id="IPR017782">
    <property type="entry name" value="Hydroxyacylglutathione_Hdrlase"/>
</dbReference>
<dbReference type="InterPro" id="IPR001279">
    <property type="entry name" value="Metallo-B-lactamas"/>
</dbReference>
<dbReference type="InterPro" id="IPR036866">
    <property type="entry name" value="RibonucZ/Hydroxyglut_hydro"/>
</dbReference>
<dbReference type="NCBIfam" id="TIGR03413">
    <property type="entry name" value="GSH_gloB"/>
    <property type="match status" value="1"/>
</dbReference>
<dbReference type="PANTHER" id="PTHR43705">
    <property type="entry name" value="HYDROXYACYLGLUTATHIONE HYDROLASE"/>
    <property type="match status" value="1"/>
</dbReference>
<dbReference type="PANTHER" id="PTHR43705:SF1">
    <property type="entry name" value="HYDROXYACYLGLUTATHIONE HYDROLASE GLOB"/>
    <property type="match status" value="1"/>
</dbReference>
<dbReference type="Pfam" id="PF16123">
    <property type="entry name" value="HAGH_C"/>
    <property type="match status" value="1"/>
</dbReference>
<dbReference type="Pfam" id="PF00753">
    <property type="entry name" value="Lactamase_B"/>
    <property type="match status" value="1"/>
</dbReference>
<dbReference type="PIRSF" id="PIRSF005457">
    <property type="entry name" value="Glx"/>
    <property type="match status" value="1"/>
</dbReference>
<dbReference type="SMART" id="SM00849">
    <property type="entry name" value="Lactamase_B"/>
    <property type="match status" value="1"/>
</dbReference>
<dbReference type="SUPFAM" id="SSF56281">
    <property type="entry name" value="Metallo-hydrolase/oxidoreductase"/>
    <property type="match status" value="1"/>
</dbReference>
<comment type="function">
    <text evidence="1">Thiolesterase that catalyzes the hydrolysis of S-D-lactoyl-glutathione to form glutathione and D-lactic acid.</text>
</comment>
<comment type="catalytic activity">
    <reaction evidence="1">
        <text>an S-(2-hydroxyacyl)glutathione + H2O = a 2-hydroxy carboxylate + glutathione + H(+)</text>
        <dbReference type="Rhea" id="RHEA:21864"/>
        <dbReference type="ChEBI" id="CHEBI:15377"/>
        <dbReference type="ChEBI" id="CHEBI:15378"/>
        <dbReference type="ChEBI" id="CHEBI:57925"/>
        <dbReference type="ChEBI" id="CHEBI:58896"/>
        <dbReference type="ChEBI" id="CHEBI:71261"/>
        <dbReference type="EC" id="3.1.2.6"/>
    </reaction>
</comment>
<comment type="cofactor">
    <cofactor evidence="1">
        <name>Zn(2+)</name>
        <dbReference type="ChEBI" id="CHEBI:29105"/>
    </cofactor>
    <text evidence="1">Binds 2 Zn(2+) ions per subunit.</text>
</comment>
<comment type="pathway">
    <text evidence="1">Secondary metabolite metabolism; methylglyoxal degradation; (R)-lactate from methylglyoxal: step 2/2.</text>
</comment>
<comment type="subunit">
    <text evidence="1">Monomer.</text>
</comment>
<comment type="similarity">
    <text evidence="1">Belongs to the metallo-beta-lactamase superfamily. Glyoxalase II family.</text>
</comment>
<evidence type="ECO:0000255" key="1">
    <source>
        <dbReference type="HAMAP-Rule" id="MF_01374"/>
    </source>
</evidence>
<accession>Q6D1V5</accession>
<reference key="1">
    <citation type="journal article" date="2004" name="Proc. Natl. Acad. Sci. U.S.A.">
        <title>Genome sequence of the enterobacterial phytopathogen Erwinia carotovora subsp. atroseptica and characterization of virulence factors.</title>
        <authorList>
            <person name="Bell K.S."/>
            <person name="Sebaihia M."/>
            <person name="Pritchard L."/>
            <person name="Holden M.T.G."/>
            <person name="Hyman L.J."/>
            <person name="Holeva M.C."/>
            <person name="Thomson N.R."/>
            <person name="Bentley S.D."/>
            <person name="Churcher L.J.C."/>
            <person name="Mungall K."/>
            <person name="Atkin R."/>
            <person name="Bason N."/>
            <person name="Brooks K."/>
            <person name="Chillingworth T."/>
            <person name="Clark K."/>
            <person name="Doggett J."/>
            <person name="Fraser A."/>
            <person name="Hance Z."/>
            <person name="Hauser H."/>
            <person name="Jagels K."/>
            <person name="Moule S."/>
            <person name="Norbertczak H."/>
            <person name="Ormond D."/>
            <person name="Price C."/>
            <person name="Quail M.A."/>
            <person name="Sanders M."/>
            <person name="Walker D."/>
            <person name="Whitehead S."/>
            <person name="Salmond G.P.C."/>
            <person name="Birch P.R.J."/>
            <person name="Parkhill J."/>
            <person name="Toth I.K."/>
        </authorList>
    </citation>
    <scope>NUCLEOTIDE SEQUENCE [LARGE SCALE GENOMIC DNA]</scope>
    <source>
        <strain>SCRI 1043 / ATCC BAA-672</strain>
    </source>
</reference>
<gene>
    <name evidence="1" type="primary">gloB</name>
    <name type="ordered locus">ECA3342</name>
</gene>
<sequence length="251" mass="28298">MNLISIPALQDNYIWLLSNKANRCVIVDPGEASPVLNALDQNALLPEAILLTHHHNDHVGGVSEILNHYPNLPVFGPKETAKCGATYLVEEGNTVSLLNSEFSVIEVPGHTSGHIAYYNAPFLFCGDTLFSAGCGRIFEGTPKQMYESIQKIAELPDDTVVCCAHEYTLSNLRFSNDIWPEDPDIESYLHKISQIREKSQSSLPTTLGLERRINLFLRCHEIDLKRKISNEPENIENWQVFKMLRSKKDCF</sequence>
<protein>
    <recommendedName>
        <fullName evidence="1">Hydroxyacylglutathione hydrolase</fullName>
        <ecNumber evidence="1">3.1.2.6</ecNumber>
    </recommendedName>
    <alternativeName>
        <fullName evidence="1">Glyoxalase II</fullName>
        <shortName evidence="1">Glx II</shortName>
    </alternativeName>
</protein>
<feature type="chain" id="PRO_0000309636" description="Hydroxyacylglutathione hydrolase">
    <location>
        <begin position="1"/>
        <end position="251"/>
    </location>
</feature>
<feature type="binding site" evidence="1">
    <location>
        <position position="53"/>
    </location>
    <ligand>
        <name>Zn(2+)</name>
        <dbReference type="ChEBI" id="CHEBI:29105"/>
        <label>1</label>
    </ligand>
</feature>
<feature type="binding site" evidence="1">
    <location>
        <position position="55"/>
    </location>
    <ligand>
        <name>Zn(2+)</name>
        <dbReference type="ChEBI" id="CHEBI:29105"/>
        <label>1</label>
    </ligand>
</feature>
<feature type="binding site" evidence="1">
    <location>
        <position position="57"/>
    </location>
    <ligand>
        <name>Zn(2+)</name>
        <dbReference type="ChEBI" id="CHEBI:29105"/>
        <label>2</label>
    </ligand>
</feature>
<feature type="binding site" evidence="1">
    <location>
        <position position="58"/>
    </location>
    <ligand>
        <name>Zn(2+)</name>
        <dbReference type="ChEBI" id="CHEBI:29105"/>
        <label>2</label>
    </ligand>
</feature>
<feature type="binding site" evidence="1">
    <location>
        <position position="110"/>
    </location>
    <ligand>
        <name>Zn(2+)</name>
        <dbReference type="ChEBI" id="CHEBI:29105"/>
        <label>1</label>
    </ligand>
</feature>
<feature type="binding site" evidence="1">
    <location>
        <position position="127"/>
    </location>
    <ligand>
        <name>Zn(2+)</name>
        <dbReference type="ChEBI" id="CHEBI:29105"/>
        <label>1</label>
    </ligand>
</feature>
<feature type="binding site" evidence="1">
    <location>
        <position position="127"/>
    </location>
    <ligand>
        <name>Zn(2+)</name>
        <dbReference type="ChEBI" id="CHEBI:29105"/>
        <label>2</label>
    </ligand>
</feature>
<feature type="binding site" evidence="1">
    <location>
        <position position="165"/>
    </location>
    <ligand>
        <name>Zn(2+)</name>
        <dbReference type="ChEBI" id="CHEBI:29105"/>
        <label>2</label>
    </ligand>
</feature>
<proteinExistence type="inferred from homology"/>
<name>GLO2_PECAS</name>
<organism>
    <name type="scientific">Pectobacterium atrosepticum (strain SCRI 1043 / ATCC BAA-672)</name>
    <name type="common">Erwinia carotovora subsp. atroseptica</name>
    <dbReference type="NCBI Taxonomy" id="218491"/>
    <lineage>
        <taxon>Bacteria</taxon>
        <taxon>Pseudomonadati</taxon>
        <taxon>Pseudomonadota</taxon>
        <taxon>Gammaproteobacteria</taxon>
        <taxon>Enterobacterales</taxon>
        <taxon>Pectobacteriaceae</taxon>
        <taxon>Pectobacterium</taxon>
    </lineage>
</organism>
<keyword id="KW-0378">Hydrolase</keyword>
<keyword id="KW-0479">Metal-binding</keyword>
<keyword id="KW-1185">Reference proteome</keyword>
<keyword id="KW-0862">Zinc</keyword>